<sequence>MAVQKNRKTRSKRGMRRSHDALTTAALSVDATSGETHLRHNVTAEGYYRGQKVINK</sequence>
<protein>
    <recommendedName>
        <fullName evidence="2">Large ribosomal subunit protein bL32</fullName>
    </recommendedName>
    <alternativeName>
        <fullName evidence="4">50S ribosomal protein L32</fullName>
    </alternativeName>
</protein>
<gene>
    <name evidence="2" type="primary">rpmF</name>
    <name type="ordered locus">VP2058</name>
</gene>
<accession>Q87N18</accession>
<reference key="1">
    <citation type="journal article" date="2003" name="Lancet">
        <title>Genome sequence of Vibrio parahaemolyticus: a pathogenic mechanism distinct from that of V. cholerae.</title>
        <authorList>
            <person name="Makino K."/>
            <person name="Oshima K."/>
            <person name="Kurokawa K."/>
            <person name="Yokoyama K."/>
            <person name="Uda T."/>
            <person name="Tagomori K."/>
            <person name="Iijima Y."/>
            <person name="Najima M."/>
            <person name="Nakano M."/>
            <person name="Yamashita A."/>
            <person name="Kubota Y."/>
            <person name="Kimura S."/>
            <person name="Yasunaga T."/>
            <person name="Honda T."/>
            <person name="Shinagawa H."/>
            <person name="Hattori M."/>
            <person name="Iida T."/>
        </authorList>
    </citation>
    <scope>NUCLEOTIDE SEQUENCE [LARGE SCALE GENOMIC DNA]</scope>
    <source>
        <strain>RIMD 2210633</strain>
    </source>
</reference>
<comment type="similarity">
    <text evidence="2">Belongs to the bacterial ribosomal protein bL32 family.</text>
</comment>
<name>RL32_VIBPA</name>
<keyword id="KW-0687">Ribonucleoprotein</keyword>
<keyword id="KW-0689">Ribosomal protein</keyword>
<evidence type="ECO:0000250" key="1"/>
<evidence type="ECO:0000255" key="2">
    <source>
        <dbReference type="HAMAP-Rule" id="MF_00340"/>
    </source>
</evidence>
<evidence type="ECO:0000256" key="3">
    <source>
        <dbReference type="SAM" id="MobiDB-lite"/>
    </source>
</evidence>
<evidence type="ECO:0000305" key="4"/>
<feature type="initiator methionine" description="Removed" evidence="1">
    <location>
        <position position="1"/>
    </location>
</feature>
<feature type="chain" id="PRO_0000172435" description="Large ribosomal subunit protein bL32">
    <location>
        <begin position="2"/>
        <end position="56"/>
    </location>
</feature>
<feature type="region of interest" description="Disordered" evidence="3">
    <location>
        <begin position="1"/>
        <end position="28"/>
    </location>
</feature>
<feature type="compositionally biased region" description="Basic residues" evidence="3">
    <location>
        <begin position="1"/>
        <end position="16"/>
    </location>
</feature>
<dbReference type="EMBL" id="BA000031">
    <property type="protein sequence ID" value="BAC60321.1"/>
    <property type="molecule type" value="Genomic_DNA"/>
</dbReference>
<dbReference type="RefSeq" id="NP_798437.1">
    <property type="nucleotide sequence ID" value="NC_004603.1"/>
</dbReference>
<dbReference type="RefSeq" id="WP_005396978.1">
    <property type="nucleotide sequence ID" value="NC_004603.1"/>
</dbReference>
<dbReference type="SMR" id="Q87N18"/>
<dbReference type="GeneID" id="83581131"/>
<dbReference type="KEGG" id="vpa:VP2058"/>
<dbReference type="PATRIC" id="fig|223926.6.peg.1968"/>
<dbReference type="eggNOG" id="COG0333">
    <property type="taxonomic scope" value="Bacteria"/>
</dbReference>
<dbReference type="HOGENOM" id="CLU_129084_2_1_6"/>
<dbReference type="PRO" id="PR:Q87N18"/>
<dbReference type="Proteomes" id="UP000002493">
    <property type="component" value="Chromosome 1"/>
</dbReference>
<dbReference type="GO" id="GO:0015934">
    <property type="term" value="C:large ribosomal subunit"/>
    <property type="evidence" value="ECO:0007669"/>
    <property type="project" value="InterPro"/>
</dbReference>
<dbReference type="GO" id="GO:0003735">
    <property type="term" value="F:structural constituent of ribosome"/>
    <property type="evidence" value="ECO:0007669"/>
    <property type="project" value="InterPro"/>
</dbReference>
<dbReference type="GO" id="GO:0006412">
    <property type="term" value="P:translation"/>
    <property type="evidence" value="ECO:0007669"/>
    <property type="project" value="UniProtKB-UniRule"/>
</dbReference>
<dbReference type="HAMAP" id="MF_00340">
    <property type="entry name" value="Ribosomal_bL32"/>
    <property type="match status" value="1"/>
</dbReference>
<dbReference type="InterPro" id="IPR002677">
    <property type="entry name" value="Ribosomal_bL32"/>
</dbReference>
<dbReference type="InterPro" id="IPR044957">
    <property type="entry name" value="Ribosomal_bL32_bact"/>
</dbReference>
<dbReference type="InterPro" id="IPR011332">
    <property type="entry name" value="Ribosomal_zn-bd"/>
</dbReference>
<dbReference type="NCBIfam" id="TIGR01031">
    <property type="entry name" value="rpmF_bact"/>
    <property type="match status" value="1"/>
</dbReference>
<dbReference type="PANTHER" id="PTHR35534">
    <property type="entry name" value="50S RIBOSOMAL PROTEIN L32"/>
    <property type="match status" value="1"/>
</dbReference>
<dbReference type="PANTHER" id="PTHR35534:SF1">
    <property type="entry name" value="LARGE RIBOSOMAL SUBUNIT PROTEIN BL32"/>
    <property type="match status" value="1"/>
</dbReference>
<dbReference type="Pfam" id="PF01783">
    <property type="entry name" value="Ribosomal_L32p"/>
    <property type="match status" value="1"/>
</dbReference>
<dbReference type="SUPFAM" id="SSF57829">
    <property type="entry name" value="Zn-binding ribosomal proteins"/>
    <property type="match status" value="1"/>
</dbReference>
<organism>
    <name type="scientific">Vibrio parahaemolyticus serotype O3:K6 (strain RIMD 2210633)</name>
    <dbReference type="NCBI Taxonomy" id="223926"/>
    <lineage>
        <taxon>Bacteria</taxon>
        <taxon>Pseudomonadati</taxon>
        <taxon>Pseudomonadota</taxon>
        <taxon>Gammaproteobacteria</taxon>
        <taxon>Vibrionales</taxon>
        <taxon>Vibrionaceae</taxon>
        <taxon>Vibrio</taxon>
    </lineage>
</organism>
<proteinExistence type="inferred from homology"/>